<comment type="function">
    <text evidence="1">Catalyzes the methylthiolation of N6-(dimethylallyl)adenosine (i(6)A), leading to the formation of 2-methylthio-N6-(dimethylallyl)adenosine (ms(2)i(6)A) at position 37 in tRNAs that read codons beginning with uridine.</text>
</comment>
<comment type="catalytic activity">
    <reaction evidence="1">
        <text>N(6)-dimethylallyladenosine(37) in tRNA + (sulfur carrier)-SH + AH2 + 2 S-adenosyl-L-methionine = 2-methylsulfanyl-N(6)-dimethylallyladenosine(37) in tRNA + (sulfur carrier)-H + 5'-deoxyadenosine + L-methionine + A + S-adenosyl-L-homocysteine + 2 H(+)</text>
        <dbReference type="Rhea" id="RHEA:37067"/>
        <dbReference type="Rhea" id="RHEA-COMP:10375"/>
        <dbReference type="Rhea" id="RHEA-COMP:10376"/>
        <dbReference type="Rhea" id="RHEA-COMP:14737"/>
        <dbReference type="Rhea" id="RHEA-COMP:14739"/>
        <dbReference type="ChEBI" id="CHEBI:13193"/>
        <dbReference type="ChEBI" id="CHEBI:15378"/>
        <dbReference type="ChEBI" id="CHEBI:17319"/>
        <dbReference type="ChEBI" id="CHEBI:17499"/>
        <dbReference type="ChEBI" id="CHEBI:29917"/>
        <dbReference type="ChEBI" id="CHEBI:57844"/>
        <dbReference type="ChEBI" id="CHEBI:57856"/>
        <dbReference type="ChEBI" id="CHEBI:59789"/>
        <dbReference type="ChEBI" id="CHEBI:64428"/>
        <dbReference type="ChEBI" id="CHEBI:74415"/>
        <dbReference type="ChEBI" id="CHEBI:74417"/>
        <dbReference type="EC" id="2.8.4.3"/>
    </reaction>
</comment>
<comment type="cofactor">
    <cofactor evidence="1">
        <name>[4Fe-4S] cluster</name>
        <dbReference type="ChEBI" id="CHEBI:49883"/>
    </cofactor>
    <text evidence="1">Binds 2 [4Fe-4S] clusters. One cluster is coordinated with 3 cysteines and an exchangeable S-adenosyl-L-methionine.</text>
</comment>
<comment type="subunit">
    <text evidence="1">Monomer.</text>
</comment>
<comment type="subcellular location">
    <subcellularLocation>
        <location evidence="1">Cytoplasm</location>
    </subcellularLocation>
</comment>
<comment type="similarity">
    <text evidence="1">Belongs to the methylthiotransferase family. MiaB subfamily.</text>
</comment>
<accession>Q39TA3</accession>
<reference key="1">
    <citation type="journal article" date="2009" name="BMC Microbiol.">
        <title>The genome sequence of Geobacter metallireducens: features of metabolism, physiology and regulation common and dissimilar to Geobacter sulfurreducens.</title>
        <authorList>
            <person name="Aklujkar M."/>
            <person name="Krushkal J."/>
            <person name="DiBartolo G."/>
            <person name="Lapidus A."/>
            <person name="Land M.L."/>
            <person name="Lovley D.R."/>
        </authorList>
    </citation>
    <scope>NUCLEOTIDE SEQUENCE [LARGE SCALE GENOMIC DNA]</scope>
    <source>
        <strain>ATCC 53774 / DSM 7210 / GS-15</strain>
    </source>
</reference>
<name>MIAB_GEOMG</name>
<organism>
    <name type="scientific">Geobacter metallireducens (strain ATCC 53774 / DSM 7210 / GS-15)</name>
    <dbReference type="NCBI Taxonomy" id="269799"/>
    <lineage>
        <taxon>Bacteria</taxon>
        <taxon>Pseudomonadati</taxon>
        <taxon>Thermodesulfobacteriota</taxon>
        <taxon>Desulfuromonadia</taxon>
        <taxon>Geobacterales</taxon>
        <taxon>Geobacteraceae</taxon>
        <taxon>Geobacter</taxon>
    </lineage>
</organism>
<protein>
    <recommendedName>
        <fullName evidence="1">tRNA-2-methylthio-N(6)-dimethylallyladenosine synthase</fullName>
        <ecNumber evidence="1">2.8.4.3</ecNumber>
    </recommendedName>
    <alternativeName>
        <fullName evidence="1">(Dimethylallyl)adenosine tRNA methylthiotransferase MiaB</fullName>
    </alternativeName>
    <alternativeName>
        <fullName evidence="1">tRNA-i(6)A37 methylthiotransferase</fullName>
    </alternativeName>
</protein>
<proteinExistence type="inferred from homology"/>
<evidence type="ECO:0000255" key="1">
    <source>
        <dbReference type="HAMAP-Rule" id="MF_01864"/>
    </source>
</evidence>
<evidence type="ECO:0000255" key="2">
    <source>
        <dbReference type="PROSITE-ProRule" id="PRU01266"/>
    </source>
</evidence>
<gene>
    <name evidence="1" type="primary">miaB</name>
    <name type="ordered locus">Gmet_2296</name>
</gene>
<feature type="chain" id="PRO_0000374319" description="tRNA-2-methylthio-N(6)-dimethylallyladenosine synthase">
    <location>
        <begin position="1"/>
        <end position="441"/>
    </location>
</feature>
<feature type="domain" description="MTTase N-terminal" evidence="1">
    <location>
        <begin position="5"/>
        <end position="120"/>
    </location>
</feature>
<feature type="domain" description="Radical SAM core" evidence="2">
    <location>
        <begin position="144"/>
        <end position="374"/>
    </location>
</feature>
<feature type="domain" description="TRAM" evidence="1">
    <location>
        <begin position="377"/>
        <end position="439"/>
    </location>
</feature>
<feature type="binding site" evidence="1">
    <location>
        <position position="14"/>
    </location>
    <ligand>
        <name>[4Fe-4S] cluster</name>
        <dbReference type="ChEBI" id="CHEBI:49883"/>
        <label>1</label>
    </ligand>
</feature>
<feature type="binding site" evidence="1">
    <location>
        <position position="50"/>
    </location>
    <ligand>
        <name>[4Fe-4S] cluster</name>
        <dbReference type="ChEBI" id="CHEBI:49883"/>
        <label>1</label>
    </ligand>
</feature>
<feature type="binding site" evidence="1">
    <location>
        <position position="83"/>
    </location>
    <ligand>
        <name>[4Fe-4S] cluster</name>
        <dbReference type="ChEBI" id="CHEBI:49883"/>
        <label>1</label>
    </ligand>
</feature>
<feature type="binding site" evidence="1">
    <location>
        <position position="158"/>
    </location>
    <ligand>
        <name>[4Fe-4S] cluster</name>
        <dbReference type="ChEBI" id="CHEBI:49883"/>
        <label>2</label>
        <note>4Fe-4S-S-AdoMet</note>
    </ligand>
</feature>
<feature type="binding site" evidence="1">
    <location>
        <position position="162"/>
    </location>
    <ligand>
        <name>[4Fe-4S] cluster</name>
        <dbReference type="ChEBI" id="CHEBI:49883"/>
        <label>2</label>
        <note>4Fe-4S-S-AdoMet</note>
    </ligand>
</feature>
<feature type="binding site" evidence="1">
    <location>
        <position position="165"/>
    </location>
    <ligand>
        <name>[4Fe-4S] cluster</name>
        <dbReference type="ChEBI" id="CHEBI:49883"/>
        <label>2</label>
        <note>4Fe-4S-S-AdoMet</note>
    </ligand>
</feature>
<keyword id="KW-0004">4Fe-4S</keyword>
<keyword id="KW-0963">Cytoplasm</keyword>
<keyword id="KW-0408">Iron</keyword>
<keyword id="KW-0411">Iron-sulfur</keyword>
<keyword id="KW-0479">Metal-binding</keyword>
<keyword id="KW-1185">Reference proteome</keyword>
<keyword id="KW-0949">S-adenosyl-L-methionine</keyword>
<keyword id="KW-0808">Transferase</keyword>
<keyword id="KW-0819">tRNA processing</keyword>
<sequence>MTGEKLLYIETFGCQMNVSDSEKVASLLRGEGYSQTPDSSEADLIIVNTCSVRAKAEHKVYSYLGRFRKLKRDRRLLLGVGGCVAQQEGERLLKRVPWLDLVFGTHNLHLLPEMVRAAEQGERRAAVDFIDNEARLDLFPQADEGGGVTRFVTVMQGCDNFCSYCIVPYVRGREISRRSVEIIGEIRSAVAGGVREVTLLGQNVNSYGLKTPGELSFAGLLREISAIDGLERIRFTTSHPKDISPELIACFAELPKLCGHIHLPAQAGSDSILARMNRGYTRQEYLEKVAALRAARPEILITGDIIVGFPGETEADFLQTLSLMEEVRYTDIFSFAYSPRPETAAASLGDRIMRKETTERLERVQGLQRDMTIERHAGFVGTCQAVLVEGMSKRGDQLYGRTDGNLIVNFAGNPSLAGSLVDVRITRGYPNSLLGELAVFQ</sequence>
<dbReference type="EC" id="2.8.4.3" evidence="1"/>
<dbReference type="EMBL" id="CP000148">
    <property type="protein sequence ID" value="ABB32521.1"/>
    <property type="molecule type" value="Genomic_DNA"/>
</dbReference>
<dbReference type="RefSeq" id="WP_004514502.1">
    <property type="nucleotide sequence ID" value="NC_007517.1"/>
</dbReference>
<dbReference type="SMR" id="Q39TA3"/>
<dbReference type="STRING" id="269799.Gmet_2296"/>
<dbReference type="KEGG" id="gme:Gmet_2296"/>
<dbReference type="eggNOG" id="COG0621">
    <property type="taxonomic scope" value="Bacteria"/>
</dbReference>
<dbReference type="HOGENOM" id="CLU_018697_2_0_7"/>
<dbReference type="Proteomes" id="UP000007073">
    <property type="component" value="Chromosome"/>
</dbReference>
<dbReference type="GO" id="GO:0005829">
    <property type="term" value="C:cytosol"/>
    <property type="evidence" value="ECO:0007669"/>
    <property type="project" value="TreeGrafter"/>
</dbReference>
<dbReference type="GO" id="GO:0051539">
    <property type="term" value="F:4 iron, 4 sulfur cluster binding"/>
    <property type="evidence" value="ECO:0007669"/>
    <property type="project" value="UniProtKB-UniRule"/>
</dbReference>
<dbReference type="GO" id="GO:0046872">
    <property type="term" value="F:metal ion binding"/>
    <property type="evidence" value="ECO:0007669"/>
    <property type="project" value="UniProtKB-KW"/>
</dbReference>
<dbReference type="GO" id="GO:0035597">
    <property type="term" value="F:N6-isopentenyladenosine methylthiotransferase activity"/>
    <property type="evidence" value="ECO:0007669"/>
    <property type="project" value="TreeGrafter"/>
</dbReference>
<dbReference type="CDD" id="cd01335">
    <property type="entry name" value="Radical_SAM"/>
    <property type="match status" value="1"/>
</dbReference>
<dbReference type="FunFam" id="3.40.50.12160:FF:000003">
    <property type="entry name" value="CDK5 regulatory subunit-associated protein 1"/>
    <property type="match status" value="1"/>
</dbReference>
<dbReference type="FunFam" id="3.80.30.20:FF:000001">
    <property type="entry name" value="tRNA-2-methylthio-N(6)-dimethylallyladenosine synthase 2"/>
    <property type="match status" value="1"/>
</dbReference>
<dbReference type="Gene3D" id="3.40.50.12160">
    <property type="entry name" value="Methylthiotransferase, N-terminal domain"/>
    <property type="match status" value="1"/>
</dbReference>
<dbReference type="Gene3D" id="3.80.30.20">
    <property type="entry name" value="tm_1862 like domain"/>
    <property type="match status" value="1"/>
</dbReference>
<dbReference type="HAMAP" id="MF_01864">
    <property type="entry name" value="tRNA_metthiotr_MiaB"/>
    <property type="match status" value="1"/>
</dbReference>
<dbReference type="InterPro" id="IPR006638">
    <property type="entry name" value="Elp3/MiaA/NifB-like_rSAM"/>
</dbReference>
<dbReference type="InterPro" id="IPR005839">
    <property type="entry name" value="Methylthiotransferase"/>
</dbReference>
<dbReference type="InterPro" id="IPR020612">
    <property type="entry name" value="Methylthiotransferase_CS"/>
</dbReference>
<dbReference type="InterPro" id="IPR013848">
    <property type="entry name" value="Methylthiotransferase_N"/>
</dbReference>
<dbReference type="InterPro" id="IPR038135">
    <property type="entry name" value="Methylthiotransferase_N_sf"/>
</dbReference>
<dbReference type="InterPro" id="IPR006463">
    <property type="entry name" value="MiaB_methiolase"/>
</dbReference>
<dbReference type="InterPro" id="IPR007197">
    <property type="entry name" value="rSAM"/>
</dbReference>
<dbReference type="InterPro" id="IPR023404">
    <property type="entry name" value="rSAM_horseshoe"/>
</dbReference>
<dbReference type="InterPro" id="IPR002792">
    <property type="entry name" value="TRAM_dom"/>
</dbReference>
<dbReference type="NCBIfam" id="TIGR01574">
    <property type="entry name" value="miaB-methiolase"/>
    <property type="match status" value="1"/>
</dbReference>
<dbReference type="NCBIfam" id="TIGR00089">
    <property type="entry name" value="MiaB/RimO family radical SAM methylthiotransferase"/>
    <property type="match status" value="1"/>
</dbReference>
<dbReference type="PANTHER" id="PTHR43020">
    <property type="entry name" value="CDK5 REGULATORY SUBUNIT-ASSOCIATED PROTEIN 1"/>
    <property type="match status" value="1"/>
</dbReference>
<dbReference type="PANTHER" id="PTHR43020:SF2">
    <property type="entry name" value="MITOCHONDRIAL TRNA METHYLTHIOTRANSFERASE CDK5RAP1"/>
    <property type="match status" value="1"/>
</dbReference>
<dbReference type="Pfam" id="PF04055">
    <property type="entry name" value="Radical_SAM"/>
    <property type="match status" value="1"/>
</dbReference>
<dbReference type="Pfam" id="PF01938">
    <property type="entry name" value="TRAM"/>
    <property type="match status" value="1"/>
</dbReference>
<dbReference type="Pfam" id="PF00919">
    <property type="entry name" value="UPF0004"/>
    <property type="match status" value="1"/>
</dbReference>
<dbReference type="SFLD" id="SFLDF00273">
    <property type="entry name" value="(dimethylallyl)adenosine_tRNA"/>
    <property type="match status" value="1"/>
</dbReference>
<dbReference type="SFLD" id="SFLDG01082">
    <property type="entry name" value="B12-binding_domain_containing"/>
    <property type="match status" value="1"/>
</dbReference>
<dbReference type="SFLD" id="SFLDG01061">
    <property type="entry name" value="methylthiotransferase"/>
    <property type="match status" value="1"/>
</dbReference>
<dbReference type="SMART" id="SM00729">
    <property type="entry name" value="Elp3"/>
    <property type="match status" value="1"/>
</dbReference>
<dbReference type="SUPFAM" id="SSF102114">
    <property type="entry name" value="Radical SAM enzymes"/>
    <property type="match status" value="1"/>
</dbReference>
<dbReference type="PROSITE" id="PS51449">
    <property type="entry name" value="MTTASE_N"/>
    <property type="match status" value="1"/>
</dbReference>
<dbReference type="PROSITE" id="PS01278">
    <property type="entry name" value="MTTASE_RADICAL"/>
    <property type="match status" value="1"/>
</dbReference>
<dbReference type="PROSITE" id="PS51918">
    <property type="entry name" value="RADICAL_SAM"/>
    <property type="match status" value="1"/>
</dbReference>
<dbReference type="PROSITE" id="PS50926">
    <property type="entry name" value="TRAM"/>
    <property type="match status" value="1"/>
</dbReference>